<accession>Q9VYY2</accession>
<evidence type="ECO:0000250" key="1">
    <source>
        <dbReference type="UniProtKB" id="Q04969"/>
    </source>
</evidence>
<evidence type="ECO:0000250" key="2">
    <source>
        <dbReference type="UniProtKB" id="Q15005"/>
    </source>
</evidence>
<evidence type="ECO:0000250" key="3">
    <source>
        <dbReference type="UniProtKB" id="Q28250"/>
    </source>
</evidence>
<evidence type="ECO:0000255" key="4"/>
<evidence type="ECO:0000305" key="5"/>
<proteinExistence type="evidence at transcript level"/>
<protein>
    <recommendedName>
        <fullName>Signal peptidase complex subunit 2</fullName>
    </recommendedName>
    <alternativeName>
        <fullName>Microsomal signal peptidase 25 kDa subunit</fullName>
        <shortName>SPase 25 kDa subunit</shortName>
    </alternativeName>
</protein>
<comment type="function">
    <text evidence="1 2">Component of the signal peptidase complex (SPC) which catalyzes the cleavage of N-terminal signal sequences from nascent proteins as they are translocated into the lumen of the endoplasmic reticulum (By similarity). Enhances the enzymatic activity of SPC and facilitates the interactions between different components of the translocation site (By similarity).</text>
</comment>
<comment type="subunit">
    <text evidence="2">Component of the signal peptidase complex (SPC) composed of a catalytic subunit twr/SEC11 and three accessory subunits Spase12/SPCS1, Spase25/SPCS2 and Spase22-23/SPCS3. The complex induces a local thinning of the ER membrane which is used to measure the length of the signal peptide (SP) h-region of protein substrates. This ensures the selectivity of the complex towards h-regions shorter than 18-20 amino acids.</text>
</comment>
<comment type="subcellular location">
    <subcellularLocation>
        <location evidence="3">Endoplasmic reticulum membrane</location>
        <topology evidence="3">Multi-pass membrane protein</topology>
    </subcellularLocation>
</comment>
<comment type="similarity">
    <text evidence="5">Belongs to the SPCS2 family.</text>
</comment>
<feature type="chain" id="PRO_0000221166" description="Signal peptidase complex subunit 2">
    <location>
        <begin position="1"/>
        <end position="199"/>
    </location>
</feature>
<feature type="topological domain" description="Cytoplasmic" evidence="3">
    <location>
        <begin position="1"/>
        <end position="49"/>
    </location>
</feature>
<feature type="transmembrane region" description="Helical" evidence="4">
    <location>
        <begin position="50"/>
        <end position="72"/>
    </location>
</feature>
<feature type="topological domain" description="Lumenal" evidence="3">
    <location>
        <begin position="73"/>
        <end position="81"/>
    </location>
</feature>
<feature type="transmembrane region" description="Helical" evidence="4">
    <location>
        <begin position="82"/>
        <end position="104"/>
    </location>
</feature>
<feature type="topological domain" description="Cytoplasmic" evidence="3">
    <location>
        <begin position="105"/>
        <end position="199"/>
    </location>
</feature>
<gene>
    <name type="primary">Spase25</name>
    <name type="ORF">CG1751</name>
</gene>
<reference key="1">
    <citation type="journal article" date="2000" name="Science">
        <title>The genome sequence of Drosophila melanogaster.</title>
        <authorList>
            <person name="Adams M.D."/>
            <person name="Celniker S.E."/>
            <person name="Holt R.A."/>
            <person name="Evans C.A."/>
            <person name="Gocayne J.D."/>
            <person name="Amanatides P.G."/>
            <person name="Scherer S.E."/>
            <person name="Li P.W."/>
            <person name="Hoskins R.A."/>
            <person name="Galle R.F."/>
            <person name="George R.A."/>
            <person name="Lewis S.E."/>
            <person name="Richards S."/>
            <person name="Ashburner M."/>
            <person name="Henderson S.N."/>
            <person name="Sutton G.G."/>
            <person name="Wortman J.R."/>
            <person name="Yandell M.D."/>
            <person name="Zhang Q."/>
            <person name="Chen L.X."/>
            <person name="Brandon R.C."/>
            <person name="Rogers Y.-H.C."/>
            <person name="Blazej R.G."/>
            <person name="Champe M."/>
            <person name="Pfeiffer B.D."/>
            <person name="Wan K.H."/>
            <person name="Doyle C."/>
            <person name="Baxter E.G."/>
            <person name="Helt G."/>
            <person name="Nelson C.R."/>
            <person name="Miklos G.L.G."/>
            <person name="Abril J.F."/>
            <person name="Agbayani A."/>
            <person name="An H.-J."/>
            <person name="Andrews-Pfannkoch C."/>
            <person name="Baldwin D."/>
            <person name="Ballew R.M."/>
            <person name="Basu A."/>
            <person name="Baxendale J."/>
            <person name="Bayraktaroglu L."/>
            <person name="Beasley E.M."/>
            <person name="Beeson K.Y."/>
            <person name="Benos P.V."/>
            <person name="Berman B.P."/>
            <person name="Bhandari D."/>
            <person name="Bolshakov S."/>
            <person name="Borkova D."/>
            <person name="Botchan M.R."/>
            <person name="Bouck J."/>
            <person name="Brokstein P."/>
            <person name="Brottier P."/>
            <person name="Burtis K.C."/>
            <person name="Busam D.A."/>
            <person name="Butler H."/>
            <person name="Cadieu E."/>
            <person name="Center A."/>
            <person name="Chandra I."/>
            <person name="Cherry J.M."/>
            <person name="Cawley S."/>
            <person name="Dahlke C."/>
            <person name="Davenport L.B."/>
            <person name="Davies P."/>
            <person name="de Pablos B."/>
            <person name="Delcher A."/>
            <person name="Deng Z."/>
            <person name="Mays A.D."/>
            <person name="Dew I."/>
            <person name="Dietz S.M."/>
            <person name="Dodson K."/>
            <person name="Doup L.E."/>
            <person name="Downes M."/>
            <person name="Dugan-Rocha S."/>
            <person name="Dunkov B.C."/>
            <person name="Dunn P."/>
            <person name="Durbin K.J."/>
            <person name="Evangelista C.C."/>
            <person name="Ferraz C."/>
            <person name="Ferriera S."/>
            <person name="Fleischmann W."/>
            <person name="Fosler C."/>
            <person name="Gabrielian A.E."/>
            <person name="Garg N.S."/>
            <person name="Gelbart W.M."/>
            <person name="Glasser K."/>
            <person name="Glodek A."/>
            <person name="Gong F."/>
            <person name="Gorrell J.H."/>
            <person name="Gu Z."/>
            <person name="Guan P."/>
            <person name="Harris M."/>
            <person name="Harris N.L."/>
            <person name="Harvey D.A."/>
            <person name="Heiman T.J."/>
            <person name="Hernandez J.R."/>
            <person name="Houck J."/>
            <person name="Hostin D."/>
            <person name="Houston K.A."/>
            <person name="Howland T.J."/>
            <person name="Wei M.-H."/>
            <person name="Ibegwam C."/>
            <person name="Jalali M."/>
            <person name="Kalush F."/>
            <person name="Karpen G.H."/>
            <person name="Ke Z."/>
            <person name="Kennison J.A."/>
            <person name="Ketchum K.A."/>
            <person name="Kimmel B.E."/>
            <person name="Kodira C.D."/>
            <person name="Kraft C.L."/>
            <person name="Kravitz S."/>
            <person name="Kulp D."/>
            <person name="Lai Z."/>
            <person name="Lasko P."/>
            <person name="Lei Y."/>
            <person name="Levitsky A.A."/>
            <person name="Li J.H."/>
            <person name="Li Z."/>
            <person name="Liang Y."/>
            <person name="Lin X."/>
            <person name="Liu X."/>
            <person name="Mattei B."/>
            <person name="McIntosh T.C."/>
            <person name="McLeod M.P."/>
            <person name="McPherson D."/>
            <person name="Merkulov G."/>
            <person name="Milshina N.V."/>
            <person name="Mobarry C."/>
            <person name="Morris J."/>
            <person name="Moshrefi A."/>
            <person name="Mount S.M."/>
            <person name="Moy M."/>
            <person name="Murphy B."/>
            <person name="Murphy L."/>
            <person name="Muzny D.M."/>
            <person name="Nelson D.L."/>
            <person name="Nelson D.R."/>
            <person name="Nelson K.A."/>
            <person name="Nixon K."/>
            <person name="Nusskern D.R."/>
            <person name="Pacleb J.M."/>
            <person name="Palazzolo M."/>
            <person name="Pittman G.S."/>
            <person name="Pan S."/>
            <person name="Pollard J."/>
            <person name="Puri V."/>
            <person name="Reese M.G."/>
            <person name="Reinert K."/>
            <person name="Remington K."/>
            <person name="Saunders R.D.C."/>
            <person name="Scheeler F."/>
            <person name="Shen H."/>
            <person name="Shue B.C."/>
            <person name="Siden-Kiamos I."/>
            <person name="Simpson M."/>
            <person name="Skupski M.P."/>
            <person name="Smith T.J."/>
            <person name="Spier E."/>
            <person name="Spradling A.C."/>
            <person name="Stapleton M."/>
            <person name="Strong R."/>
            <person name="Sun E."/>
            <person name="Svirskas R."/>
            <person name="Tector C."/>
            <person name="Turner R."/>
            <person name="Venter E."/>
            <person name="Wang A.H."/>
            <person name="Wang X."/>
            <person name="Wang Z.-Y."/>
            <person name="Wassarman D.A."/>
            <person name="Weinstock G.M."/>
            <person name="Weissenbach J."/>
            <person name="Williams S.M."/>
            <person name="Woodage T."/>
            <person name="Worley K.C."/>
            <person name="Wu D."/>
            <person name="Yang S."/>
            <person name="Yao Q.A."/>
            <person name="Ye J."/>
            <person name="Yeh R.-F."/>
            <person name="Zaveri J.S."/>
            <person name="Zhan M."/>
            <person name="Zhang G."/>
            <person name="Zhao Q."/>
            <person name="Zheng L."/>
            <person name="Zheng X.H."/>
            <person name="Zhong F.N."/>
            <person name="Zhong W."/>
            <person name="Zhou X."/>
            <person name="Zhu S.C."/>
            <person name="Zhu X."/>
            <person name="Smith H.O."/>
            <person name="Gibbs R.A."/>
            <person name="Myers E.W."/>
            <person name="Rubin G.M."/>
            <person name="Venter J.C."/>
        </authorList>
    </citation>
    <scope>NUCLEOTIDE SEQUENCE [LARGE SCALE GENOMIC DNA]</scope>
    <source>
        <strain>Berkeley</strain>
    </source>
</reference>
<reference key="2">
    <citation type="journal article" date="2002" name="Genome Biol.">
        <title>Annotation of the Drosophila melanogaster euchromatic genome: a systematic review.</title>
        <authorList>
            <person name="Misra S."/>
            <person name="Crosby M.A."/>
            <person name="Mungall C.J."/>
            <person name="Matthews B.B."/>
            <person name="Campbell K.S."/>
            <person name="Hradecky P."/>
            <person name="Huang Y."/>
            <person name="Kaminker J.S."/>
            <person name="Millburn G.H."/>
            <person name="Prochnik S.E."/>
            <person name="Smith C.D."/>
            <person name="Tupy J.L."/>
            <person name="Whitfield E.J."/>
            <person name="Bayraktaroglu L."/>
            <person name="Berman B.P."/>
            <person name="Bettencourt B.R."/>
            <person name="Celniker S.E."/>
            <person name="de Grey A.D.N.J."/>
            <person name="Drysdale R.A."/>
            <person name="Harris N.L."/>
            <person name="Richter J."/>
            <person name="Russo S."/>
            <person name="Schroeder A.J."/>
            <person name="Shu S.Q."/>
            <person name="Stapleton M."/>
            <person name="Yamada C."/>
            <person name="Ashburner M."/>
            <person name="Gelbart W.M."/>
            <person name="Rubin G.M."/>
            <person name="Lewis S.E."/>
        </authorList>
    </citation>
    <scope>GENOME REANNOTATION</scope>
    <source>
        <strain>Berkeley</strain>
    </source>
</reference>
<reference key="3">
    <citation type="journal article" date="2002" name="Genome Biol.">
        <title>A Drosophila full-length cDNA resource.</title>
        <authorList>
            <person name="Stapleton M."/>
            <person name="Carlson J.W."/>
            <person name="Brokstein P."/>
            <person name="Yu C."/>
            <person name="Champe M."/>
            <person name="George R.A."/>
            <person name="Guarin H."/>
            <person name="Kronmiller B."/>
            <person name="Pacleb J.M."/>
            <person name="Park S."/>
            <person name="Wan K.H."/>
            <person name="Rubin G.M."/>
            <person name="Celniker S.E."/>
        </authorList>
    </citation>
    <scope>NUCLEOTIDE SEQUENCE [LARGE SCALE MRNA]</scope>
    <source>
        <strain>Berkeley</strain>
        <tissue>Embryo</tissue>
    </source>
</reference>
<reference key="4">
    <citation type="journal article" date="2005" name="Development">
        <title>CrebA regulates secretory activity in the Drosophila salivary gland and epidermis.</title>
        <authorList>
            <person name="Abrams E.W."/>
            <person name="Andrew D.J."/>
        </authorList>
    </citation>
    <scope>IDENTIFICATION</scope>
</reference>
<keyword id="KW-0256">Endoplasmic reticulum</keyword>
<keyword id="KW-0472">Membrane</keyword>
<keyword id="KW-1185">Reference proteome</keyword>
<keyword id="KW-0812">Transmembrane</keyword>
<keyword id="KW-1133">Transmembrane helix</keyword>
<organism>
    <name type="scientific">Drosophila melanogaster</name>
    <name type="common">Fruit fly</name>
    <dbReference type="NCBI Taxonomy" id="7227"/>
    <lineage>
        <taxon>Eukaryota</taxon>
        <taxon>Metazoa</taxon>
        <taxon>Ecdysozoa</taxon>
        <taxon>Arthropoda</taxon>
        <taxon>Hexapoda</taxon>
        <taxon>Insecta</taxon>
        <taxon>Pterygota</taxon>
        <taxon>Neoptera</taxon>
        <taxon>Endopterygota</taxon>
        <taxon>Diptera</taxon>
        <taxon>Brachycera</taxon>
        <taxon>Muscomorpha</taxon>
        <taxon>Ephydroidea</taxon>
        <taxon>Drosophilidae</taxon>
        <taxon>Drosophila</taxon>
        <taxon>Sophophora</taxon>
    </lineage>
</organism>
<sequence>MGKKDEKSQQGEELVKVNKWDGSAVKHALDDAVKTCLLGDRPQLKEQFGLVNTRLALCALAVSVAIMAHAWDFTHPFPESRPVLLFSVLAYFALLGILTLHSSFREKGTFAVALQKDKERERLWEASSDMRKYDDKYLLTLSVRDTKNGKRREQSSNKSCAAFIDQNGIVLDNLVANEVNRLFNALAADKKNASSLSSN</sequence>
<name>SPCS2_DROME</name>
<dbReference type="EMBL" id="AE014298">
    <property type="protein sequence ID" value="AAF48051.1"/>
    <property type="molecule type" value="Genomic_DNA"/>
</dbReference>
<dbReference type="EMBL" id="AY094832">
    <property type="protein sequence ID" value="AAM11185.1"/>
    <property type="molecule type" value="mRNA"/>
</dbReference>
<dbReference type="RefSeq" id="NP_001285124.1">
    <property type="nucleotide sequence ID" value="NM_001298195.1"/>
</dbReference>
<dbReference type="RefSeq" id="NP_001285125.1">
    <property type="nucleotide sequence ID" value="NM_001298196.1"/>
</dbReference>
<dbReference type="RefSeq" id="NP_572723.1">
    <property type="nucleotide sequence ID" value="NM_132495.3"/>
</dbReference>
<dbReference type="SMR" id="Q9VYY2"/>
<dbReference type="BioGRID" id="58506">
    <property type="interactions" value="23"/>
</dbReference>
<dbReference type="ComplexPortal" id="CPX-2233">
    <property type="entry name" value="Signal peptidase complex"/>
</dbReference>
<dbReference type="FunCoup" id="Q9VYY2">
    <property type="interactions" value="2086"/>
</dbReference>
<dbReference type="IntAct" id="Q9VYY2">
    <property type="interactions" value="25"/>
</dbReference>
<dbReference type="STRING" id="7227.FBpp0309255"/>
<dbReference type="PaxDb" id="7227-FBpp0073355"/>
<dbReference type="DNASU" id="32095"/>
<dbReference type="EnsemblMetazoa" id="FBtr0073506">
    <property type="protein sequence ID" value="FBpp0073355"/>
    <property type="gene ID" value="FBgn0030306"/>
</dbReference>
<dbReference type="EnsemblMetazoa" id="FBtr0340293">
    <property type="protein sequence ID" value="FBpp0309254"/>
    <property type="gene ID" value="FBgn0030306"/>
</dbReference>
<dbReference type="EnsemblMetazoa" id="FBtr0340294">
    <property type="protein sequence ID" value="FBpp0309255"/>
    <property type="gene ID" value="FBgn0030306"/>
</dbReference>
<dbReference type="GeneID" id="32095"/>
<dbReference type="KEGG" id="dme:Dmel_CG1751"/>
<dbReference type="AGR" id="FB:FBgn0030306"/>
<dbReference type="CTD" id="32095"/>
<dbReference type="FlyBase" id="FBgn0030306">
    <property type="gene designation" value="Spase25"/>
</dbReference>
<dbReference type="VEuPathDB" id="VectorBase:FBgn0030306"/>
<dbReference type="eggNOG" id="KOG4072">
    <property type="taxonomic scope" value="Eukaryota"/>
</dbReference>
<dbReference type="GeneTree" id="ENSGT00440000038181"/>
<dbReference type="HOGENOM" id="CLU_094622_0_0_1"/>
<dbReference type="InParanoid" id="Q9VYY2"/>
<dbReference type="OMA" id="INKWDGT"/>
<dbReference type="OrthoDB" id="29558at2759"/>
<dbReference type="PhylomeDB" id="Q9VYY2"/>
<dbReference type="BioGRID-ORCS" id="32095">
    <property type="hits" value="1 hit in 1 CRISPR screen"/>
</dbReference>
<dbReference type="ChiTaRS" id="Spase25">
    <property type="organism name" value="fly"/>
</dbReference>
<dbReference type="GenomeRNAi" id="32095"/>
<dbReference type="PRO" id="PR:Q9VYY2"/>
<dbReference type="Proteomes" id="UP000000803">
    <property type="component" value="Chromosome X"/>
</dbReference>
<dbReference type="Bgee" id="FBgn0030306">
    <property type="expression patterns" value="Expressed in spermatid in male reproductive gland and 182 other cell types or tissues"/>
</dbReference>
<dbReference type="ExpressionAtlas" id="Q9VYY2">
    <property type="expression patterns" value="baseline and differential"/>
</dbReference>
<dbReference type="GO" id="GO:0012505">
    <property type="term" value="C:endomembrane system"/>
    <property type="evidence" value="ECO:0007005"/>
    <property type="project" value="FlyBase"/>
</dbReference>
<dbReference type="GO" id="GO:0005787">
    <property type="term" value="C:signal peptidase complex"/>
    <property type="evidence" value="ECO:0000318"/>
    <property type="project" value="GO_Central"/>
</dbReference>
<dbReference type="GO" id="GO:0045047">
    <property type="term" value="P:protein targeting to ER"/>
    <property type="evidence" value="ECO:0000318"/>
    <property type="project" value="GO_Central"/>
</dbReference>
<dbReference type="GO" id="GO:0006465">
    <property type="term" value="P:signal peptide processing"/>
    <property type="evidence" value="ECO:0000318"/>
    <property type="project" value="GO_Central"/>
</dbReference>
<dbReference type="InterPro" id="IPR009582">
    <property type="entry name" value="Spc2/SPCS2"/>
</dbReference>
<dbReference type="PANTHER" id="PTHR13085">
    <property type="entry name" value="MICROSOMAL SIGNAL PEPTIDASE 25 KDA SUBUNIT"/>
    <property type="match status" value="1"/>
</dbReference>
<dbReference type="PANTHER" id="PTHR13085:SF0">
    <property type="entry name" value="SIGNAL PEPTIDASE COMPLEX SUBUNIT 2"/>
    <property type="match status" value="1"/>
</dbReference>
<dbReference type="Pfam" id="PF06703">
    <property type="entry name" value="SPC25"/>
    <property type="match status" value="1"/>
</dbReference>